<accession>Q3K5Z5</accession>
<organism>
    <name type="scientific">Pseudomonas fluorescens (strain Pf0-1)</name>
    <dbReference type="NCBI Taxonomy" id="205922"/>
    <lineage>
        <taxon>Bacteria</taxon>
        <taxon>Pseudomonadati</taxon>
        <taxon>Pseudomonadota</taxon>
        <taxon>Gammaproteobacteria</taxon>
        <taxon>Pseudomonadales</taxon>
        <taxon>Pseudomonadaceae</taxon>
        <taxon>Pseudomonas</taxon>
    </lineage>
</organism>
<protein>
    <recommendedName>
        <fullName evidence="1">Large ribosomal subunit protein uL16</fullName>
    </recommendedName>
    <alternativeName>
        <fullName evidence="2">50S ribosomal protein L16</fullName>
    </alternativeName>
</protein>
<sequence>MLQPKRTKFRKQMTGHNRGLALRGSKVSFGEFALKSVARGRLTARQIESARRALTRHVKRGGKIWIRVFPDKPISKKPLEVRMGKGKGNVEYWVAQIQPGKVLYEIEGVSEELAREAFALAAAKLPLATSFVKRTVM</sequence>
<dbReference type="EMBL" id="CP000094">
    <property type="protein sequence ID" value="ABA76809.1"/>
    <property type="molecule type" value="Genomic_DNA"/>
</dbReference>
<dbReference type="RefSeq" id="WP_003228729.1">
    <property type="nucleotide sequence ID" value="NC_007492.2"/>
</dbReference>
<dbReference type="SMR" id="Q3K5Z5"/>
<dbReference type="GeneID" id="93491407"/>
<dbReference type="KEGG" id="pfo:Pfl01_5072"/>
<dbReference type="eggNOG" id="COG0197">
    <property type="taxonomic scope" value="Bacteria"/>
</dbReference>
<dbReference type="HOGENOM" id="CLU_078858_2_1_6"/>
<dbReference type="Proteomes" id="UP000002704">
    <property type="component" value="Chromosome"/>
</dbReference>
<dbReference type="GO" id="GO:0022625">
    <property type="term" value="C:cytosolic large ribosomal subunit"/>
    <property type="evidence" value="ECO:0007669"/>
    <property type="project" value="TreeGrafter"/>
</dbReference>
<dbReference type="GO" id="GO:0019843">
    <property type="term" value="F:rRNA binding"/>
    <property type="evidence" value="ECO:0007669"/>
    <property type="project" value="UniProtKB-UniRule"/>
</dbReference>
<dbReference type="GO" id="GO:0003735">
    <property type="term" value="F:structural constituent of ribosome"/>
    <property type="evidence" value="ECO:0007669"/>
    <property type="project" value="InterPro"/>
</dbReference>
<dbReference type="GO" id="GO:0000049">
    <property type="term" value="F:tRNA binding"/>
    <property type="evidence" value="ECO:0007669"/>
    <property type="project" value="UniProtKB-KW"/>
</dbReference>
<dbReference type="GO" id="GO:0006412">
    <property type="term" value="P:translation"/>
    <property type="evidence" value="ECO:0007669"/>
    <property type="project" value="UniProtKB-UniRule"/>
</dbReference>
<dbReference type="CDD" id="cd01433">
    <property type="entry name" value="Ribosomal_L16_L10e"/>
    <property type="match status" value="1"/>
</dbReference>
<dbReference type="FunFam" id="3.90.1170.10:FF:000001">
    <property type="entry name" value="50S ribosomal protein L16"/>
    <property type="match status" value="1"/>
</dbReference>
<dbReference type="Gene3D" id="3.90.1170.10">
    <property type="entry name" value="Ribosomal protein L10e/L16"/>
    <property type="match status" value="1"/>
</dbReference>
<dbReference type="HAMAP" id="MF_01342">
    <property type="entry name" value="Ribosomal_uL16"/>
    <property type="match status" value="1"/>
</dbReference>
<dbReference type="InterPro" id="IPR047873">
    <property type="entry name" value="Ribosomal_uL16"/>
</dbReference>
<dbReference type="InterPro" id="IPR000114">
    <property type="entry name" value="Ribosomal_uL16_bact-type"/>
</dbReference>
<dbReference type="InterPro" id="IPR020798">
    <property type="entry name" value="Ribosomal_uL16_CS"/>
</dbReference>
<dbReference type="InterPro" id="IPR016180">
    <property type="entry name" value="Ribosomal_uL16_dom"/>
</dbReference>
<dbReference type="InterPro" id="IPR036920">
    <property type="entry name" value="Ribosomal_uL16_sf"/>
</dbReference>
<dbReference type="NCBIfam" id="TIGR01164">
    <property type="entry name" value="rplP_bact"/>
    <property type="match status" value="1"/>
</dbReference>
<dbReference type="PANTHER" id="PTHR12220">
    <property type="entry name" value="50S/60S RIBOSOMAL PROTEIN L16"/>
    <property type="match status" value="1"/>
</dbReference>
<dbReference type="PANTHER" id="PTHR12220:SF13">
    <property type="entry name" value="LARGE RIBOSOMAL SUBUNIT PROTEIN UL16M"/>
    <property type="match status" value="1"/>
</dbReference>
<dbReference type="Pfam" id="PF00252">
    <property type="entry name" value="Ribosomal_L16"/>
    <property type="match status" value="1"/>
</dbReference>
<dbReference type="PRINTS" id="PR00060">
    <property type="entry name" value="RIBOSOMALL16"/>
</dbReference>
<dbReference type="SUPFAM" id="SSF54686">
    <property type="entry name" value="Ribosomal protein L16p/L10e"/>
    <property type="match status" value="1"/>
</dbReference>
<dbReference type="PROSITE" id="PS00586">
    <property type="entry name" value="RIBOSOMAL_L16_1"/>
    <property type="match status" value="1"/>
</dbReference>
<dbReference type="PROSITE" id="PS00701">
    <property type="entry name" value="RIBOSOMAL_L16_2"/>
    <property type="match status" value="1"/>
</dbReference>
<proteinExistence type="inferred from homology"/>
<reference key="1">
    <citation type="journal article" date="2009" name="Genome Biol.">
        <title>Genomic and genetic analyses of diversity and plant interactions of Pseudomonas fluorescens.</title>
        <authorList>
            <person name="Silby M.W."/>
            <person name="Cerdeno-Tarraga A.M."/>
            <person name="Vernikos G.S."/>
            <person name="Giddens S.R."/>
            <person name="Jackson R.W."/>
            <person name="Preston G.M."/>
            <person name="Zhang X.-X."/>
            <person name="Moon C.D."/>
            <person name="Gehrig S.M."/>
            <person name="Godfrey S.A.C."/>
            <person name="Knight C.G."/>
            <person name="Malone J.G."/>
            <person name="Robinson Z."/>
            <person name="Spiers A.J."/>
            <person name="Harris S."/>
            <person name="Challis G.L."/>
            <person name="Yaxley A.M."/>
            <person name="Harris D."/>
            <person name="Seeger K."/>
            <person name="Murphy L."/>
            <person name="Rutter S."/>
            <person name="Squares R."/>
            <person name="Quail M.A."/>
            <person name="Saunders E."/>
            <person name="Mavromatis K."/>
            <person name="Brettin T.S."/>
            <person name="Bentley S.D."/>
            <person name="Hothersall J."/>
            <person name="Stephens E."/>
            <person name="Thomas C.M."/>
            <person name="Parkhill J."/>
            <person name="Levy S.B."/>
            <person name="Rainey P.B."/>
            <person name="Thomson N.R."/>
        </authorList>
    </citation>
    <scope>NUCLEOTIDE SEQUENCE [LARGE SCALE GENOMIC DNA]</scope>
    <source>
        <strain>Pf0-1</strain>
    </source>
</reference>
<evidence type="ECO:0000255" key="1">
    <source>
        <dbReference type="HAMAP-Rule" id="MF_01342"/>
    </source>
</evidence>
<evidence type="ECO:0000305" key="2"/>
<feature type="chain" id="PRO_0000251655" description="Large ribosomal subunit protein uL16">
    <location>
        <begin position="1"/>
        <end position="137"/>
    </location>
</feature>
<keyword id="KW-0687">Ribonucleoprotein</keyword>
<keyword id="KW-0689">Ribosomal protein</keyword>
<keyword id="KW-0694">RNA-binding</keyword>
<keyword id="KW-0699">rRNA-binding</keyword>
<keyword id="KW-0820">tRNA-binding</keyword>
<gene>
    <name evidence="1" type="primary">rplP</name>
    <name type="ordered locus">Pfl01_5072</name>
</gene>
<comment type="function">
    <text evidence="1">Binds 23S rRNA and is also seen to make contacts with the A and possibly P site tRNAs.</text>
</comment>
<comment type="subunit">
    <text evidence="1">Part of the 50S ribosomal subunit.</text>
</comment>
<comment type="similarity">
    <text evidence="1">Belongs to the universal ribosomal protein uL16 family.</text>
</comment>
<name>RL16_PSEPF</name>